<sequence>MDVFMKGLSKAKEGVVAAAEKTKQGVAEAAGKTKEGVLYVGSKTKEGVVHGVATVAEKTKEQVTNVGGAVVTGVTAVAQKTVEGAGSIAAATGFVKKDQLGKNEEGAPQEGILQDMPVDPDNEAYEMPSEEGYQDYEPEA</sequence>
<comment type="function">
    <text evidence="4">Neuronal protein that plays several roles in synaptic activity such as regulation of synaptic vesicle trafficking and subsequent neurotransmitter release (By similarity). Participates as a monomer in synaptic vesicle exocytosis by enhancing vesicle priming, fusion and dilation of exocytotic fusion pores (By similarity). Mechanistically, acts by increasing local Ca(2+) release from microdomains which is essential for the enhancement of ATP-induced exocytosis (By similarity). Also acts as a molecular chaperone in its multimeric membrane-bound state, assisting in the folding of synaptic fusion components called SNAREs (Soluble NSF Attachment Protein REceptors) at presynaptic plasma membrane in conjunction with cysteine string protein-alpha/DNAJC5 (By similarity). This chaperone activity is important to sustain normal SNARE-complex assembly during aging (By similarity). Also plays a role in the regulation of the dopamine neurotransmission by associating with the dopamine transporter (DAT1) and thereby modulating its activity (By similarity).</text>
</comment>
<comment type="subunit">
    <text evidence="2 4">Soluble monomer. Homotetramer. A dynamic intracellular population of tetramers and monomers coexists normally and the tetramer plays an essential role in maintaining homeostasis (By similarity). Interacts with UCHL1 (By similarity). Interacts with phospholipase D and histones. Interacts (via N-terminus) with synphilin-1/SNCAIP; this interaction promotes formation of SNCA inclusions in the cytoplasm. Interacts with CALM1. Interacts with STXBP1; this interaction controls SNCA self-replicating aggregation. Interacts with SNARE components VAMP2 and SNAP25; these interactions allows SNARE complex assembly and integrity (By similarity). Interacts with RPH3A and RAB3A (By similarity). Interacts with SERF1A; this interaction promotes the aggregation of SNCA (By similarity). Interacts with SEPTIN4 (By similarity). Interacts with DDX10; this interaction causes DDX10 mislocalization to the nucleoplasm and cytoplasmic inclusions (By similarity).</text>
</comment>
<comment type="subcellular location">
    <subcellularLocation>
        <location evidence="4">Cytoplasm</location>
        <location evidence="4">Cytosol</location>
    </subcellularLocation>
    <subcellularLocation>
        <location evidence="4">Membrane</location>
    </subcellularLocation>
    <subcellularLocation>
        <location evidence="4">Nucleus</location>
    </subcellularLocation>
    <subcellularLocation>
        <location evidence="4">Synapse</location>
    </subcellularLocation>
    <subcellularLocation>
        <location evidence="4">Secreted</location>
    </subcellularLocation>
    <subcellularLocation>
        <location evidence="2">Cell projection</location>
        <location evidence="2">Axon</location>
    </subcellularLocation>
    <text evidence="2 4">Membrane-bound in dopaminergic neurons (By similarity). Expressed and colocalized with SEPTIN4 in dopaminergic axon terminals, especially at the varicosities (By similarity).</text>
</comment>
<comment type="PTM">
    <text evidence="4">Phosphorylated, predominantly on serine residues. Phosphorylated on Tyr-125 upon osmotic stress.</text>
</comment>
<comment type="PTM">
    <text evidence="3">Ubiquitinated. The predominant conjugate is the diubiquitinated form.</text>
</comment>
<comment type="PTM">
    <text evidence="4">Acetylation at Met-1 seems to be important for proper folding and native oligomeric structure.</text>
</comment>
<comment type="similarity">
    <text evidence="6">Belongs to the synuclein family.</text>
</comment>
<gene>
    <name type="primary">SNCA</name>
</gene>
<keyword id="KW-0007">Acetylation</keyword>
<keyword id="KW-0966">Cell projection</keyword>
<keyword id="KW-0186">Copper</keyword>
<keyword id="KW-0963">Cytoplasm</keyword>
<keyword id="KW-0472">Membrane</keyword>
<keyword id="KW-0479">Metal-binding</keyword>
<keyword id="KW-0539">Nucleus</keyword>
<keyword id="KW-0597">Phosphoprotein</keyword>
<keyword id="KW-0677">Repeat</keyword>
<keyword id="KW-0964">Secreted</keyword>
<keyword id="KW-0770">Synapse</keyword>
<keyword id="KW-0832">Ubl conjugation</keyword>
<dbReference type="EMBL" id="AY362324">
    <property type="protein sequence ID" value="AAQ85067.1"/>
    <property type="molecule type" value="Genomic_DNA"/>
</dbReference>
<dbReference type="EMBL" id="AY362320">
    <property type="protein sequence ID" value="AAQ85067.1"/>
    <property type="status" value="JOINED"/>
    <property type="molecule type" value="Genomic_DNA"/>
</dbReference>
<dbReference type="EMBL" id="AY362321">
    <property type="protein sequence ID" value="AAQ85067.1"/>
    <property type="status" value="JOINED"/>
    <property type="molecule type" value="Genomic_DNA"/>
</dbReference>
<dbReference type="EMBL" id="AY362322">
    <property type="protein sequence ID" value="AAQ85067.1"/>
    <property type="status" value="JOINED"/>
    <property type="molecule type" value="Genomic_DNA"/>
</dbReference>
<dbReference type="EMBL" id="AY362323">
    <property type="protein sequence ID" value="AAQ85067.1"/>
    <property type="status" value="JOINED"/>
    <property type="molecule type" value="Genomic_DNA"/>
</dbReference>
<dbReference type="BMRB" id="P61139"/>
<dbReference type="GO" id="GO:0043679">
    <property type="term" value="C:axon terminus"/>
    <property type="evidence" value="ECO:0007669"/>
    <property type="project" value="TreeGrafter"/>
</dbReference>
<dbReference type="GO" id="GO:0005829">
    <property type="term" value="C:cytosol"/>
    <property type="evidence" value="ECO:0000250"/>
    <property type="project" value="UniProtKB"/>
</dbReference>
<dbReference type="GO" id="GO:0005615">
    <property type="term" value="C:extracellular space"/>
    <property type="evidence" value="ECO:0000250"/>
    <property type="project" value="UniProtKB"/>
</dbReference>
<dbReference type="GO" id="GO:0016020">
    <property type="term" value="C:membrane"/>
    <property type="evidence" value="ECO:0000250"/>
    <property type="project" value="UniProtKB"/>
</dbReference>
<dbReference type="GO" id="GO:0043025">
    <property type="term" value="C:neuronal cell body"/>
    <property type="evidence" value="ECO:0007669"/>
    <property type="project" value="TreeGrafter"/>
</dbReference>
<dbReference type="GO" id="GO:0005634">
    <property type="term" value="C:nucleus"/>
    <property type="evidence" value="ECO:0000250"/>
    <property type="project" value="UniProtKB"/>
</dbReference>
<dbReference type="GO" id="GO:0005507">
    <property type="term" value="F:copper ion binding"/>
    <property type="evidence" value="ECO:0000250"/>
    <property type="project" value="UniProtKB"/>
</dbReference>
<dbReference type="GO" id="GO:1903136">
    <property type="term" value="F:cuprous ion binding"/>
    <property type="evidence" value="ECO:0007669"/>
    <property type="project" value="TreeGrafter"/>
</dbReference>
<dbReference type="GO" id="GO:0042802">
    <property type="term" value="F:identical protein binding"/>
    <property type="evidence" value="ECO:0000250"/>
    <property type="project" value="UniProtKB"/>
</dbReference>
<dbReference type="GO" id="GO:0007268">
    <property type="term" value="P:chemical synaptic transmission"/>
    <property type="evidence" value="ECO:0007669"/>
    <property type="project" value="TreeGrafter"/>
</dbReference>
<dbReference type="GO" id="GO:0014059">
    <property type="term" value="P:regulation of dopamine secretion"/>
    <property type="evidence" value="ECO:0007669"/>
    <property type="project" value="InterPro"/>
</dbReference>
<dbReference type="GO" id="GO:0050808">
    <property type="term" value="P:synapse organization"/>
    <property type="evidence" value="ECO:0007669"/>
    <property type="project" value="TreeGrafter"/>
</dbReference>
<dbReference type="GO" id="GO:0048488">
    <property type="term" value="P:synaptic vesicle endocytosis"/>
    <property type="evidence" value="ECO:0007669"/>
    <property type="project" value="TreeGrafter"/>
</dbReference>
<dbReference type="FunFam" id="1.10.287.700:FF:000001">
    <property type="entry name" value="Alpha-synuclein"/>
    <property type="match status" value="1"/>
</dbReference>
<dbReference type="Gene3D" id="1.10.287.700">
    <property type="entry name" value="Helix hairpin bin"/>
    <property type="match status" value="1"/>
</dbReference>
<dbReference type="InterPro" id="IPR001058">
    <property type="entry name" value="Synuclein"/>
</dbReference>
<dbReference type="InterPro" id="IPR002460">
    <property type="entry name" value="Synuclein_alpha"/>
</dbReference>
<dbReference type="PANTHER" id="PTHR13820:SF5">
    <property type="entry name" value="ALPHA-SYNUCLEIN"/>
    <property type="match status" value="1"/>
</dbReference>
<dbReference type="PANTHER" id="PTHR13820">
    <property type="entry name" value="SYNUCLEIN"/>
    <property type="match status" value="1"/>
</dbReference>
<dbReference type="Pfam" id="PF01387">
    <property type="entry name" value="Synuclein"/>
    <property type="match status" value="1"/>
</dbReference>
<dbReference type="PRINTS" id="PR01212">
    <property type="entry name" value="ASYNUCLEIN"/>
</dbReference>
<dbReference type="PRINTS" id="PR01211">
    <property type="entry name" value="SYNUCLEIN"/>
</dbReference>
<dbReference type="SUPFAM" id="SSF118375">
    <property type="entry name" value="Synuclein"/>
    <property type="match status" value="1"/>
</dbReference>
<name>SYUA_ERYPA</name>
<reference key="1">
    <citation type="journal article" date="2004" name="Genomics">
        <title>Alpha-synuclein A53T substitution associated with Parkinson disease also marks the divergence of Old World and New World primates.</title>
        <authorList>
            <person name="Hamilton B.A."/>
        </authorList>
    </citation>
    <scope>NUCLEOTIDE SEQUENCE [GENOMIC DNA]</scope>
</reference>
<accession>P61139</accession>
<proteinExistence type="inferred from homology"/>
<feature type="chain" id="PRO_0000184020" description="Alpha-synuclein">
    <location>
        <begin position="1"/>
        <end position="140"/>
    </location>
</feature>
<feature type="region of interest" description="Disordered" evidence="5">
    <location>
        <begin position="100"/>
        <end position="140"/>
    </location>
</feature>
<feature type="region of interest" description="Interaction with SERF1A" evidence="4">
    <location>
        <begin position="111"/>
        <end position="140"/>
    </location>
</feature>
<feature type="compositionally biased region" description="Acidic residues" evidence="5">
    <location>
        <begin position="118"/>
        <end position="140"/>
    </location>
</feature>
<feature type="binding site" evidence="1">
    <location>
        <position position="2"/>
    </location>
    <ligand>
        <name>Cu cation</name>
        <dbReference type="ChEBI" id="CHEBI:23378"/>
    </ligand>
</feature>
<feature type="binding site" evidence="1">
    <location>
        <position position="50"/>
    </location>
    <ligand>
        <name>Cu cation</name>
        <dbReference type="ChEBI" id="CHEBI:23378"/>
    </ligand>
</feature>
<feature type="modified residue" description="N-acetylmethionine" evidence="4">
    <location>
        <position position="1"/>
    </location>
</feature>
<feature type="modified residue" description="Phosphoserine" evidence="4">
    <location>
        <position position="87"/>
    </location>
</feature>
<feature type="modified residue" description="Phosphotyrosine; by FYN" evidence="4">
    <location>
        <position position="125"/>
    </location>
</feature>
<feature type="modified residue" description="Phosphoserine; by PLK2" evidence="4">
    <location>
        <position position="129"/>
    </location>
</feature>
<evidence type="ECO:0000250" key="1"/>
<evidence type="ECO:0000250" key="2">
    <source>
        <dbReference type="UniProtKB" id="O55042"/>
    </source>
</evidence>
<evidence type="ECO:0000250" key="3">
    <source>
        <dbReference type="UniProtKB" id="P37377"/>
    </source>
</evidence>
<evidence type="ECO:0000250" key="4">
    <source>
        <dbReference type="UniProtKB" id="P37840"/>
    </source>
</evidence>
<evidence type="ECO:0000256" key="5">
    <source>
        <dbReference type="SAM" id="MobiDB-lite"/>
    </source>
</evidence>
<evidence type="ECO:0000305" key="6"/>
<protein>
    <recommendedName>
        <fullName>Alpha-synuclein</fullName>
    </recommendedName>
</protein>
<organism>
    <name type="scientific">Erythrocebus patas</name>
    <name type="common">Red guenon</name>
    <name type="synonym">Cercopithecus patas</name>
    <dbReference type="NCBI Taxonomy" id="9538"/>
    <lineage>
        <taxon>Eukaryota</taxon>
        <taxon>Metazoa</taxon>
        <taxon>Chordata</taxon>
        <taxon>Craniata</taxon>
        <taxon>Vertebrata</taxon>
        <taxon>Euteleostomi</taxon>
        <taxon>Mammalia</taxon>
        <taxon>Eutheria</taxon>
        <taxon>Euarchontoglires</taxon>
        <taxon>Primates</taxon>
        <taxon>Haplorrhini</taxon>
        <taxon>Catarrhini</taxon>
        <taxon>Cercopithecidae</taxon>
        <taxon>Cercopithecinae</taxon>
        <taxon>Erythrocebus</taxon>
    </lineage>
</organism>